<protein>
    <recommendedName>
        <fullName evidence="1">Regulator of ribonuclease activity A</fullName>
    </recommendedName>
</protein>
<sequence>MRIDTSALCDIYSDQVDVVEPIFSSFGGASSFYGKITTVKCFESNGLIASVLEEEGQGRVLLIDGGGAVRRALIDAELAQLALDNGWEGIIVYGAVRQLDVLETLDIGIHALAPIPVGADDNEIGEVDTPVNFGGVTFFPEDYVYADLTGIILSPELLDLAELEE</sequence>
<gene>
    <name evidence="1" type="primary">rraA</name>
    <name type="ordered locus">APJL_1946</name>
</gene>
<comment type="function">
    <text evidence="1">Globally modulates RNA abundance by binding to RNase E (Rne) and regulating its endonucleolytic activity. Can modulate Rne action in a substrate-dependent manner by altering the composition of the degradosome. Modulates RNA-binding and helicase activities of the degradosome.</text>
</comment>
<comment type="subunit">
    <text evidence="1">Homotrimer. Binds to both RNA-binding sites in the C-terminal region of Rne and to RhlB.</text>
</comment>
<comment type="subcellular location">
    <subcellularLocation>
        <location evidence="1">Cytoplasm</location>
    </subcellularLocation>
</comment>
<comment type="similarity">
    <text evidence="1">Belongs to the RraA family.</text>
</comment>
<evidence type="ECO:0000255" key="1">
    <source>
        <dbReference type="HAMAP-Rule" id="MF_00471"/>
    </source>
</evidence>
<reference key="1">
    <citation type="journal article" date="2008" name="PLoS ONE">
        <title>Genome biology of Actinobacillus pleuropneumoniae JL03, an isolate of serotype 3 prevalent in China.</title>
        <authorList>
            <person name="Xu Z."/>
            <person name="Zhou Y."/>
            <person name="Li L."/>
            <person name="Zhou R."/>
            <person name="Xiao S."/>
            <person name="Wan Y."/>
            <person name="Zhang S."/>
            <person name="Wang K."/>
            <person name="Li W."/>
            <person name="Li L."/>
            <person name="Jin H."/>
            <person name="Kang M."/>
            <person name="Dalai B."/>
            <person name="Li T."/>
            <person name="Liu L."/>
            <person name="Cheng Y."/>
            <person name="Zhang L."/>
            <person name="Xu T."/>
            <person name="Zheng H."/>
            <person name="Pu S."/>
            <person name="Wang B."/>
            <person name="Gu W."/>
            <person name="Zhang X.L."/>
            <person name="Zhu G.-F."/>
            <person name="Wang S."/>
            <person name="Zhao G.-P."/>
            <person name="Chen H."/>
        </authorList>
    </citation>
    <scope>NUCLEOTIDE SEQUENCE [LARGE SCALE GENOMIC DNA]</scope>
    <source>
        <strain>JL03</strain>
    </source>
</reference>
<accession>B0BTI0</accession>
<dbReference type="EMBL" id="CP000687">
    <property type="protein sequence ID" value="ABY70494.1"/>
    <property type="molecule type" value="Genomic_DNA"/>
</dbReference>
<dbReference type="RefSeq" id="WP_005599612.1">
    <property type="nucleotide sequence ID" value="NC_010278.1"/>
</dbReference>
<dbReference type="SMR" id="B0BTI0"/>
<dbReference type="GeneID" id="48600205"/>
<dbReference type="KEGG" id="apj:APJL_1946"/>
<dbReference type="HOGENOM" id="CLU_072626_4_0_6"/>
<dbReference type="Proteomes" id="UP000008547">
    <property type="component" value="Chromosome"/>
</dbReference>
<dbReference type="GO" id="GO:0005737">
    <property type="term" value="C:cytoplasm"/>
    <property type="evidence" value="ECO:0007669"/>
    <property type="project" value="UniProtKB-SubCell"/>
</dbReference>
<dbReference type="GO" id="GO:0060698">
    <property type="term" value="F:endoribonuclease inhibitor activity"/>
    <property type="evidence" value="ECO:0007669"/>
    <property type="project" value="UniProtKB-UniRule"/>
</dbReference>
<dbReference type="GO" id="GO:0019899">
    <property type="term" value="F:enzyme binding"/>
    <property type="evidence" value="ECO:0007669"/>
    <property type="project" value="UniProtKB-UniRule"/>
</dbReference>
<dbReference type="GO" id="GO:0051252">
    <property type="term" value="P:regulation of RNA metabolic process"/>
    <property type="evidence" value="ECO:0007669"/>
    <property type="project" value="InterPro"/>
</dbReference>
<dbReference type="CDD" id="cd16841">
    <property type="entry name" value="RraA_family"/>
    <property type="match status" value="1"/>
</dbReference>
<dbReference type="Gene3D" id="3.50.30.40">
    <property type="entry name" value="Ribonuclease E inhibitor RraA/RraA-like"/>
    <property type="match status" value="1"/>
</dbReference>
<dbReference type="HAMAP" id="MF_00471">
    <property type="entry name" value="RraA"/>
    <property type="match status" value="1"/>
</dbReference>
<dbReference type="InterPro" id="IPR010203">
    <property type="entry name" value="RraA"/>
</dbReference>
<dbReference type="InterPro" id="IPR005493">
    <property type="entry name" value="RraA/RraA-like"/>
</dbReference>
<dbReference type="InterPro" id="IPR036704">
    <property type="entry name" value="RraA/RraA-like_sf"/>
</dbReference>
<dbReference type="InterPro" id="IPR014339">
    <property type="entry name" value="RraA_gpbac"/>
</dbReference>
<dbReference type="NCBIfam" id="TIGR01935">
    <property type="entry name" value="NOT-MenG"/>
    <property type="match status" value="1"/>
</dbReference>
<dbReference type="NCBIfam" id="NF006875">
    <property type="entry name" value="PRK09372.1"/>
    <property type="match status" value="1"/>
</dbReference>
<dbReference type="NCBIfam" id="TIGR02998">
    <property type="entry name" value="RraA_entero"/>
    <property type="match status" value="1"/>
</dbReference>
<dbReference type="PANTHER" id="PTHR33254">
    <property type="entry name" value="4-HYDROXY-4-METHYL-2-OXOGLUTARATE ALDOLASE 3-RELATED"/>
    <property type="match status" value="1"/>
</dbReference>
<dbReference type="PANTHER" id="PTHR33254:SF29">
    <property type="entry name" value="REGULATOR OF RIBONUCLEASE ACTIVITY A"/>
    <property type="match status" value="1"/>
</dbReference>
<dbReference type="Pfam" id="PF03737">
    <property type="entry name" value="RraA-like"/>
    <property type="match status" value="1"/>
</dbReference>
<dbReference type="SUPFAM" id="SSF89562">
    <property type="entry name" value="RraA-like"/>
    <property type="match status" value="1"/>
</dbReference>
<organism>
    <name type="scientific">Actinobacillus pleuropneumoniae serotype 3 (strain JL03)</name>
    <dbReference type="NCBI Taxonomy" id="434271"/>
    <lineage>
        <taxon>Bacteria</taxon>
        <taxon>Pseudomonadati</taxon>
        <taxon>Pseudomonadota</taxon>
        <taxon>Gammaproteobacteria</taxon>
        <taxon>Pasteurellales</taxon>
        <taxon>Pasteurellaceae</taxon>
        <taxon>Actinobacillus</taxon>
    </lineage>
</organism>
<keyword id="KW-0963">Cytoplasm</keyword>
<proteinExistence type="inferred from homology"/>
<feature type="chain" id="PRO_1000125592" description="Regulator of ribonuclease activity A">
    <location>
        <begin position="1"/>
        <end position="165"/>
    </location>
</feature>
<name>RRAA_ACTPJ</name>